<evidence type="ECO:0000255" key="1">
    <source>
        <dbReference type="HAMAP-Rule" id="MF_01367"/>
    </source>
</evidence>
<evidence type="ECO:0000305" key="2"/>
<protein>
    <recommendedName>
        <fullName evidence="1">Large ribosomal subunit protein uL14</fullName>
    </recommendedName>
    <alternativeName>
        <fullName evidence="2">50S ribosomal protein L14</fullName>
    </alternativeName>
</protein>
<dbReference type="EMBL" id="CU459141">
    <property type="protein sequence ID" value="CAM85392.1"/>
    <property type="molecule type" value="Genomic_DNA"/>
</dbReference>
<dbReference type="RefSeq" id="WP_001982634.1">
    <property type="nucleotide sequence ID" value="NZ_JBDGFB010000011.1"/>
</dbReference>
<dbReference type="SMR" id="B0V6V5"/>
<dbReference type="EnsemblBacteria" id="CAM85392">
    <property type="protein sequence ID" value="CAM85392"/>
    <property type="gene ID" value="ABAYE0418"/>
</dbReference>
<dbReference type="GeneID" id="97425209"/>
<dbReference type="KEGG" id="aby:ABAYE0418"/>
<dbReference type="HOGENOM" id="CLU_095071_2_1_6"/>
<dbReference type="GO" id="GO:0022625">
    <property type="term" value="C:cytosolic large ribosomal subunit"/>
    <property type="evidence" value="ECO:0007669"/>
    <property type="project" value="TreeGrafter"/>
</dbReference>
<dbReference type="GO" id="GO:0070180">
    <property type="term" value="F:large ribosomal subunit rRNA binding"/>
    <property type="evidence" value="ECO:0007669"/>
    <property type="project" value="TreeGrafter"/>
</dbReference>
<dbReference type="GO" id="GO:0003735">
    <property type="term" value="F:structural constituent of ribosome"/>
    <property type="evidence" value="ECO:0007669"/>
    <property type="project" value="InterPro"/>
</dbReference>
<dbReference type="GO" id="GO:0006412">
    <property type="term" value="P:translation"/>
    <property type="evidence" value="ECO:0007669"/>
    <property type="project" value="UniProtKB-UniRule"/>
</dbReference>
<dbReference type="CDD" id="cd00337">
    <property type="entry name" value="Ribosomal_uL14"/>
    <property type="match status" value="1"/>
</dbReference>
<dbReference type="FunFam" id="2.40.150.20:FF:000001">
    <property type="entry name" value="50S ribosomal protein L14"/>
    <property type="match status" value="1"/>
</dbReference>
<dbReference type="Gene3D" id="2.40.150.20">
    <property type="entry name" value="Ribosomal protein L14"/>
    <property type="match status" value="1"/>
</dbReference>
<dbReference type="HAMAP" id="MF_01367">
    <property type="entry name" value="Ribosomal_uL14"/>
    <property type="match status" value="1"/>
</dbReference>
<dbReference type="InterPro" id="IPR000218">
    <property type="entry name" value="Ribosomal_uL14"/>
</dbReference>
<dbReference type="InterPro" id="IPR005745">
    <property type="entry name" value="Ribosomal_uL14_bac-type"/>
</dbReference>
<dbReference type="InterPro" id="IPR019972">
    <property type="entry name" value="Ribosomal_uL14_CS"/>
</dbReference>
<dbReference type="InterPro" id="IPR036853">
    <property type="entry name" value="Ribosomal_uL14_sf"/>
</dbReference>
<dbReference type="NCBIfam" id="TIGR01067">
    <property type="entry name" value="rplN_bact"/>
    <property type="match status" value="1"/>
</dbReference>
<dbReference type="PANTHER" id="PTHR11761">
    <property type="entry name" value="50S/60S RIBOSOMAL PROTEIN L14/L23"/>
    <property type="match status" value="1"/>
</dbReference>
<dbReference type="PANTHER" id="PTHR11761:SF3">
    <property type="entry name" value="LARGE RIBOSOMAL SUBUNIT PROTEIN UL14M"/>
    <property type="match status" value="1"/>
</dbReference>
<dbReference type="Pfam" id="PF00238">
    <property type="entry name" value="Ribosomal_L14"/>
    <property type="match status" value="1"/>
</dbReference>
<dbReference type="SMART" id="SM01374">
    <property type="entry name" value="Ribosomal_L14"/>
    <property type="match status" value="1"/>
</dbReference>
<dbReference type="SUPFAM" id="SSF50193">
    <property type="entry name" value="Ribosomal protein L14"/>
    <property type="match status" value="1"/>
</dbReference>
<dbReference type="PROSITE" id="PS00049">
    <property type="entry name" value="RIBOSOMAL_L14"/>
    <property type="match status" value="1"/>
</dbReference>
<organism>
    <name type="scientific">Acinetobacter baumannii (strain AYE)</name>
    <dbReference type="NCBI Taxonomy" id="509173"/>
    <lineage>
        <taxon>Bacteria</taxon>
        <taxon>Pseudomonadati</taxon>
        <taxon>Pseudomonadota</taxon>
        <taxon>Gammaproteobacteria</taxon>
        <taxon>Moraxellales</taxon>
        <taxon>Moraxellaceae</taxon>
        <taxon>Acinetobacter</taxon>
        <taxon>Acinetobacter calcoaceticus/baumannii complex</taxon>
    </lineage>
</organism>
<feature type="chain" id="PRO_1000144209" description="Large ribosomal subunit protein uL14">
    <location>
        <begin position="1"/>
        <end position="122"/>
    </location>
</feature>
<name>RL14_ACIBY</name>
<reference key="1">
    <citation type="journal article" date="2008" name="PLoS ONE">
        <title>Comparative analysis of Acinetobacters: three genomes for three lifestyles.</title>
        <authorList>
            <person name="Vallenet D."/>
            <person name="Nordmann P."/>
            <person name="Barbe V."/>
            <person name="Poirel L."/>
            <person name="Mangenot S."/>
            <person name="Bataille E."/>
            <person name="Dossat C."/>
            <person name="Gas S."/>
            <person name="Kreimeyer A."/>
            <person name="Lenoble P."/>
            <person name="Oztas S."/>
            <person name="Poulain J."/>
            <person name="Segurens B."/>
            <person name="Robert C."/>
            <person name="Abergel C."/>
            <person name="Claverie J.-M."/>
            <person name="Raoult D."/>
            <person name="Medigue C."/>
            <person name="Weissenbach J."/>
            <person name="Cruveiller S."/>
        </authorList>
    </citation>
    <scope>NUCLEOTIDE SEQUENCE [LARGE SCALE GENOMIC DNA]</scope>
    <source>
        <strain>AYE</strain>
    </source>
</reference>
<proteinExistence type="inferred from homology"/>
<accession>B0V6V5</accession>
<sequence length="122" mass="13502">MIQTETMLDVADNSGARRVQCIKVLGGSHRRYASVGDIIKVTVKEAIPRARVKKGDVMNAVVVRTKFGIRRPDGSVIRFDDNAAVILNNNKAPIATRIFGPVTRELRTEQFMKIISLAPEVL</sequence>
<gene>
    <name evidence="1" type="primary">rplN</name>
    <name type="ordered locus">ABAYE0418</name>
</gene>
<comment type="function">
    <text evidence="1">Binds to 23S rRNA. Forms part of two intersubunit bridges in the 70S ribosome.</text>
</comment>
<comment type="subunit">
    <text evidence="1">Part of the 50S ribosomal subunit. Forms a cluster with proteins L3 and L19. In the 70S ribosome, L14 and L19 interact and together make contacts with the 16S rRNA in bridges B5 and B8.</text>
</comment>
<comment type="similarity">
    <text evidence="1">Belongs to the universal ribosomal protein uL14 family.</text>
</comment>
<keyword id="KW-0687">Ribonucleoprotein</keyword>
<keyword id="KW-0689">Ribosomal protein</keyword>
<keyword id="KW-0694">RNA-binding</keyword>
<keyword id="KW-0699">rRNA-binding</keyword>